<organism>
    <name type="scientific">Homo sapiens</name>
    <name type="common">Human</name>
    <dbReference type="NCBI Taxonomy" id="9606"/>
    <lineage>
        <taxon>Eukaryota</taxon>
        <taxon>Metazoa</taxon>
        <taxon>Chordata</taxon>
        <taxon>Craniata</taxon>
        <taxon>Vertebrata</taxon>
        <taxon>Euteleostomi</taxon>
        <taxon>Mammalia</taxon>
        <taxon>Eutheria</taxon>
        <taxon>Euarchontoglires</taxon>
        <taxon>Primates</taxon>
        <taxon>Haplorrhini</taxon>
        <taxon>Catarrhini</taxon>
        <taxon>Hominidae</taxon>
        <taxon>Homo</taxon>
    </lineage>
</organism>
<feature type="chain" id="PRO_0000070187" description="Thyrotropin-releasing hormone receptor">
    <location>
        <begin position="1"/>
        <end position="398"/>
    </location>
</feature>
<feature type="topological domain" description="Extracellular" evidence="1">
    <location>
        <begin position="1"/>
        <end position="28"/>
    </location>
</feature>
<feature type="transmembrane region" description="Helical; Name=1" evidence="1">
    <location>
        <begin position="29"/>
        <end position="51"/>
    </location>
</feature>
<feature type="topological domain" description="Cytoplasmic" evidence="1">
    <location>
        <begin position="52"/>
        <end position="61"/>
    </location>
</feature>
<feature type="transmembrane region" description="Helical; Name=2" evidence="1">
    <location>
        <begin position="62"/>
        <end position="83"/>
    </location>
</feature>
<feature type="topological domain" description="Extracellular" evidence="1">
    <location>
        <begin position="84"/>
        <end position="99"/>
    </location>
</feature>
<feature type="transmembrane region" description="Helical; Name=3" evidence="1">
    <location>
        <begin position="100"/>
        <end position="121"/>
    </location>
</feature>
<feature type="topological domain" description="Cytoplasmic" evidence="1">
    <location>
        <begin position="122"/>
        <end position="144"/>
    </location>
</feature>
<feature type="transmembrane region" description="Helical; Name=4" evidence="1">
    <location>
        <begin position="145"/>
        <end position="168"/>
    </location>
</feature>
<feature type="topological domain" description="Extracellular" evidence="1">
    <location>
        <begin position="169"/>
        <end position="193"/>
    </location>
</feature>
<feature type="transmembrane region" description="Helical; Name=5" evidence="1">
    <location>
        <begin position="194"/>
        <end position="215"/>
    </location>
</feature>
<feature type="topological domain" description="Cytoplasmic" evidence="1">
    <location>
        <begin position="216"/>
        <end position="266"/>
    </location>
</feature>
<feature type="transmembrane region" description="Helical; Name=6" evidence="1">
    <location>
        <begin position="267"/>
        <end position="288"/>
    </location>
</feature>
<feature type="topological domain" description="Extracellular" evidence="1">
    <location>
        <begin position="289"/>
        <end position="296"/>
    </location>
</feature>
<feature type="transmembrane region" description="Helical; Name=7" evidence="1">
    <location>
        <begin position="297"/>
        <end position="319"/>
    </location>
</feature>
<feature type="topological domain" description="Cytoplasmic" evidence="1">
    <location>
        <begin position="320"/>
        <end position="398"/>
    </location>
</feature>
<feature type="glycosylation site" description="N-linked (GlcNAc...) asparagine" evidence="1">
    <location>
        <position position="3"/>
    </location>
</feature>
<feature type="glycosylation site" description="N-linked (GlcNAc...) asparagine" evidence="1">
    <location>
        <position position="10"/>
    </location>
</feature>
<feature type="disulfide bond" evidence="2 6">
    <location>
        <begin position="98"/>
        <end position="179"/>
    </location>
</feature>
<feature type="sequence variant" id="VAR_011857" description="In dbSNP:rs5774.">
    <original>N</original>
    <variation>K</variation>
    <location>
        <position position="10"/>
    </location>
</feature>
<feature type="sequence variant" id="VAR_083281" description="In CHNG7; loss of thyrotropin-releasing hormone receptor activity." evidence="3 7">
    <location>
        <begin position="17"/>
        <end position="398"/>
    </location>
</feature>
<feature type="sequence variant" id="VAR_083282" description="In CHNG7; loss of thyrotropin-releasing hormone receptor activity; no effect on localization to plasma membrane." evidence="4">
    <original>P</original>
    <variation>R</variation>
    <location>
        <position position="81"/>
    </location>
</feature>
<feature type="sequence variant" id="VAR_083283" description="In CHNG7; loss of thyrotropin-releasing hormone receptor activity." evidence="7">
    <original>SITA</original>
    <variation>T</variation>
    <location>
        <begin position="115"/>
        <end position="118"/>
    </location>
</feature>
<feature type="sequence variant" id="VAR_083284" description="In CHNG7; decreased affinity for TRH." evidence="5">
    <original>I</original>
    <variation>T</variation>
    <location>
        <position position="131"/>
    </location>
</feature>
<feature type="sequence variant" id="VAR_049450" description="In dbSNP:rs13306060.">
    <original>I</original>
    <variation>M</variation>
    <location>
        <position position="168"/>
    </location>
</feature>
<feature type="helix" evidence="9">
    <location>
        <begin position="24"/>
        <end position="52"/>
    </location>
</feature>
<feature type="strand" evidence="9">
    <location>
        <begin position="53"/>
        <end position="55"/>
    </location>
</feature>
<feature type="helix" evidence="9">
    <location>
        <begin position="59"/>
        <end position="78"/>
    </location>
</feature>
<feature type="helix" evidence="9">
    <location>
        <begin position="80"/>
        <end position="88"/>
    </location>
</feature>
<feature type="helix" evidence="9">
    <location>
        <begin position="95"/>
        <end position="128"/>
    </location>
</feature>
<feature type="helix" evidence="9">
    <location>
        <begin position="130"/>
        <end position="136"/>
    </location>
</feature>
<feature type="helix" evidence="9">
    <location>
        <begin position="139"/>
        <end position="161"/>
    </location>
</feature>
<feature type="strand" evidence="9">
    <location>
        <begin position="164"/>
        <end position="168"/>
    </location>
</feature>
<feature type="strand" evidence="8">
    <location>
        <begin position="170"/>
        <end position="175"/>
    </location>
</feature>
<feature type="strand" evidence="9">
    <location>
        <begin position="177"/>
        <end position="183"/>
    </location>
</feature>
<feature type="helix" evidence="9">
    <location>
        <begin position="185"/>
        <end position="188"/>
    </location>
</feature>
<feature type="helix" evidence="9">
    <location>
        <begin position="189"/>
        <end position="219"/>
    </location>
</feature>
<feature type="helix" evidence="9">
    <location>
        <begin position="258"/>
        <end position="289"/>
    </location>
</feature>
<feature type="strand" evidence="9">
    <location>
        <begin position="292"/>
        <end position="294"/>
    </location>
</feature>
<feature type="turn" evidence="9">
    <location>
        <begin position="298"/>
        <end position="300"/>
    </location>
</feature>
<feature type="helix" evidence="9">
    <location>
        <begin position="301"/>
        <end position="320"/>
    </location>
</feature>
<feature type="turn" evidence="9">
    <location>
        <begin position="321"/>
        <end position="323"/>
    </location>
</feature>
<feature type="helix" evidence="9">
    <location>
        <begin position="326"/>
        <end position="334"/>
    </location>
</feature>
<evidence type="ECO:0000255" key="1"/>
<evidence type="ECO:0000255" key="2">
    <source>
        <dbReference type="PROSITE-ProRule" id="PRU00521"/>
    </source>
</evidence>
<evidence type="ECO:0000269" key="3">
    <source>
    </source>
</evidence>
<evidence type="ECO:0000269" key="4">
    <source>
    </source>
</evidence>
<evidence type="ECO:0000269" key="5">
    <source>
    </source>
</evidence>
<evidence type="ECO:0000269" key="6">
    <source>
    </source>
</evidence>
<evidence type="ECO:0000269" key="7">
    <source>
    </source>
</evidence>
<evidence type="ECO:0007829" key="8">
    <source>
        <dbReference type="PDB" id="7X1T"/>
    </source>
</evidence>
<evidence type="ECO:0007829" key="9">
    <source>
        <dbReference type="PDB" id="7XW9"/>
    </source>
</evidence>
<gene>
    <name type="primary">TRHR</name>
</gene>
<keyword id="KW-0002">3D-structure</keyword>
<keyword id="KW-1003">Cell membrane</keyword>
<keyword id="KW-0984">Congenital hypothyroidism</keyword>
<keyword id="KW-0225">Disease variant</keyword>
<keyword id="KW-1015">Disulfide bond</keyword>
<keyword id="KW-0297">G-protein coupled receptor</keyword>
<keyword id="KW-0325">Glycoprotein</keyword>
<keyword id="KW-0472">Membrane</keyword>
<keyword id="KW-0675">Receptor</keyword>
<keyword id="KW-1185">Reference proteome</keyword>
<keyword id="KW-0807">Transducer</keyword>
<keyword id="KW-0812">Transmembrane</keyword>
<keyword id="KW-1133">Transmembrane helix</keyword>
<accession>P34981</accession>
<accession>Q2M339</accession>
<sequence>MENETVSELNQTQLQPRAVVALEYQVVTILLVLIICGLGIVGNIMVVLVVMRTKHMRTPTNCYLVSLAVADLMVLVAAGLPNITDSIYGSWVYGYVGCLCITYLQYLGINASSCSITAFTIERYIAICHPIKAQFLCTFSRAKKIIIFVWAFTSLYCMLWFFLLDLNISTYKDAIVISCGYKISRNYYSPIYLMDFGVFYVVPMILATVLYGFIARILFLNPIPSDPKENSKTWKNDSTHQNTNLNVNTSNRCFNSTVSSRKQVTKMLAVVVILFALLWMPYRTLVVVNSFLSSPFQENWFLLFCRICIYLNSAINPVIYNLMSQKFRAAFRKLCNCKQKPTEKPANYSVALNYSVIKESDHFSTELDDITVTDTYLSATKVSFDDTCLASEVSFSQS</sequence>
<dbReference type="EMBL" id="D16845">
    <property type="protein sequence ID" value="BAA04120.1"/>
    <property type="molecule type" value="mRNA"/>
</dbReference>
<dbReference type="EMBL" id="X75071">
    <property type="protein sequence ID" value="CAA52965.1"/>
    <property type="molecule type" value="mRNA"/>
</dbReference>
<dbReference type="EMBL" id="X72089">
    <property type="protein sequence ID" value="CAA50979.1"/>
    <property type="molecule type" value="mRNA"/>
</dbReference>
<dbReference type="EMBL" id="S75283">
    <property type="protein sequence ID" value="AAB32222.1"/>
    <property type="molecule type" value="Genomic_DNA"/>
</dbReference>
<dbReference type="EMBL" id="S75281">
    <property type="protein sequence ID" value="AAB32222.1"/>
    <property type="status" value="JOINED"/>
    <property type="molecule type" value="Genomic_DNA"/>
</dbReference>
<dbReference type="EMBL" id="D85376">
    <property type="protein sequence ID" value="BAA12796.1"/>
    <property type="molecule type" value="Genomic_DNA"/>
</dbReference>
<dbReference type="EMBL" id="AY493373">
    <property type="protein sequence ID" value="AAR84356.1"/>
    <property type="molecule type" value="mRNA"/>
</dbReference>
<dbReference type="EMBL" id="BC105045">
    <property type="protein sequence ID" value="AAI05046.1"/>
    <property type="molecule type" value="mRNA"/>
</dbReference>
<dbReference type="EMBL" id="BC113360">
    <property type="protein sequence ID" value="AAI13361.1"/>
    <property type="molecule type" value="mRNA"/>
</dbReference>
<dbReference type="EMBL" id="AJ011701">
    <property type="protein sequence ID" value="CAA09746.1"/>
    <property type="molecule type" value="Genomic_DNA"/>
</dbReference>
<dbReference type="CCDS" id="CCDS6311.1"/>
<dbReference type="PIR" id="S40682">
    <property type="entry name" value="JN0708"/>
</dbReference>
<dbReference type="RefSeq" id="NP_003292.1">
    <property type="nucleotide sequence ID" value="NM_003301.7"/>
</dbReference>
<dbReference type="RefSeq" id="XP_011515565.1">
    <property type="nucleotide sequence ID" value="XM_011517263.2"/>
</dbReference>
<dbReference type="PDB" id="7WKD">
    <property type="method" value="EM"/>
    <property type="resolution" value="3.01 A"/>
    <property type="chains" value="R=1-398"/>
</dbReference>
<dbReference type="PDB" id="7X1T">
    <property type="method" value="EM"/>
    <property type="resolution" value="3.26 A"/>
    <property type="chains" value="A=1-398"/>
</dbReference>
<dbReference type="PDB" id="7X1U">
    <property type="method" value="EM"/>
    <property type="resolution" value="3.19 A"/>
    <property type="chains" value="A=1-398"/>
</dbReference>
<dbReference type="PDB" id="7XW9">
    <property type="method" value="EM"/>
    <property type="resolution" value="2.70 A"/>
    <property type="chains" value="R=1-398"/>
</dbReference>
<dbReference type="PDBsum" id="7WKD"/>
<dbReference type="PDBsum" id="7X1T"/>
<dbReference type="PDBsum" id="7X1U"/>
<dbReference type="PDBsum" id="7XW9"/>
<dbReference type="EMDB" id="EMD-32565"/>
<dbReference type="EMDB" id="EMD-32949"/>
<dbReference type="EMDB" id="EMD-32950"/>
<dbReference type="EMDB" id="EMD-33494"/>
<dbReference type="SMR" id="P34981"/>
<dbReference type="BioGRID" id="113052">
    <property type="interactions" value="20"/>
</dbReference>
<dbReference type="FunCoup" id="P34981">
    <property type="interactions" value="867"/>
</dbReference>
<dbReference type="IntAct" id="P34981">
    <property type="interactions" value="18"/>
</dbReference>
<dbReference type="STRING" id="9606.ENSP00000430711"/>
<dbReference type="BindingDB" id="P34981"/>
<dbReference type="ChEMBL" id="CHEMBL1810"/>
<dbReference type="DrugBank" id="DB09421">
    <property type="generic name" value="Protirelin"/>
</dbReference>
<dbReference type="DrugCentral" id="P34981"/>
<dbReference type="GuidetoPHARMACOLOGY" id="363"/>
<dbReference type="TCDB" id="9.A.14.1.4">
    <property type="family name" value="the g-protein-coupled receptor (gpcr) family"/>
</dbReference>
<dbReference type="GlyCosmos" id="P34981">
    <property type="glycosylation" value="2 sites, No reported glycans"/>
</dbReference>
<dbReference type="GlyGen" id="P34981">
    <property type="glycosylation" value="2 sites"/>
</dbReference>
<dbReference type="iPTMnet" id="P34981"/>
<dbReference type="PhosphoSitePlus" id="P34981"/>
<dbReference type="BioMuta" id="TRHR"/>
<dbReference type="DMDM" id="464921"/>
<dbReference type="MassIVE" id="P34981"/>
<dbReference type="PaxDb" id="9606-ENSP00000430711"/>
<dbReference type="PeptideAtlas" id="P34981"/>
<dbReference type="Antibodypedia" id="13449">
    <property type="antibodies" value="302 antibodies from 31 providers"/>
</dbReference>
<dbReference type="DNASU" id="7201"/>
<dbReference type="Ensembl" id="ENST00000311762.2">
    <property type="protein sequence ID" value="ENSP00000309818.2"/>
    <property type="gene ID" value="ENSG00000174417.3"/>
</dbReference>
<dbReference type="Ensembl" id="ENST00000518632.2">
    <property type="protein sequence ID" value="ENSP00000430711.2"/>
    <property type="gene ID" value="ENSG00000174417.3"/>
</dbReference>
<dbReference type="GeneID" id="7201"/>
<dbReference type="KEGG" id="hsa:7201"/>
<dbReference type="MANE-Select" id="ENST00000518632.2">
    <property type="protein sequence ID" value="ENSP00000430711.2"/>
    <property type="RefSeq nucleotide sequence ID" value="NM_003301.7"/>
    <property type="RefSeq protein sequence ID" value="NP_003292.1"/>
</dbReference>
<dbReference type="UCSC" id="uc003ymz.5">
    <property type="organism name" value="human"/>
</dbReference>
<dbReference type="AGR" id="HGNC:12299"/>
<dbReference type="CTD" id="7201"/>
<dbReference type="DisGeNET" id="7201"/>
<dbReference type="GeneCards" id="TRHR"/>
<dbReference type="HGNC" id="HGNC:12299">
    <property type="gene designation" value="TRHR"/>
</dbReference>
<dbReference type="HPA" id="ENSG00000174417">
    <property type="expression patterns" value="Not detected"/>
</dbReference>
<dbReference type="MalaCards" id="TRHR"/>
<dbReference type="MIM" id="188545">
    <property type="type" value="gene"/>
</dbReference>
<dbReference type="MIM" id="618573">
    <property type="type" value="phenotype"/>
</dbReference>
<dbReference type="neXtProt" id="NX_P34981"/>
<dbReference type="OpenTargets" id="ENSG00000174417"/>
<dbReference type="Orphanet" id="99832">
    <property type="disease" value="Resistance to thyrotropin-releasing hormone syndrome"/>
</dbReference>
<dbReference type="PharmGKB" id="PA36979"/>
<dbReference type="VEuPathDB" id="HostDB:ENSG00000174417"/>
<dbReference type="eggNOG" id="KOG3656">
    <property type="taxonomic scope" value="Eukaryota"/>
</dbReference>
<dbReference type="GeneTree" id="ENSGT01120000271846"/>
<dbReference type="HOGENOM" id="CLU_009579_6_5_1"/>
<dbReference type="InParanoid" id="P34981"/>
<dbReference type="OMA" id="NCKQKPA"/>
<dbReference type="OrthoDB" id="10036964at2759"/>
<dbReference type="PAN-GO" id="P34981">
    <property type="GO annotations" value="2 GO annotations based on evolutionary models"/>
</dbReference>
<dbReference type="PhylomeDB" id="P34981"/>
<dbReference type="TreeFam" id="TF326170"/>
<dbReference type="PathwayCommons" id="P34981"/>
<dbReference type="Reactome" id="R-HSA-375276">
    <property type="pathway name" value="Peptide ligand-binding receptors"/>
</dbReference>
<dbReference type="Reactome" id="R-HSA-416476">
    <property type="pathway name" value="G alpha (q) signalling events"/>
</dbReference>
<dbReference type="SignaLink" id="P34981"/>
<dbReference type="SIGNOR" id="P34981"/>
<dbReference type="BioGRID-ORCS" id="7201">
    <property type="hits" value="9 hits in 1138 CRISPR screens"/>
</dbReference>
<dbReference type="ChiTaRS" id="TRHR">
    <property type="organism name" value="human"/>
</dbReference>
<dbReference type="GeneWiki" id="Thyrotropin-releasing_hormone_receptor"/>
<dbReference type="GenomeRNAi" id="7201"/>
<dbReference type="Pharos" id="P34981">
    <property type="development level" value="Tclin"/>
</dbReference>
<dbReference type="PRO" id="PR:P34981"/>
<dbReference type="Proteomes" id="UP000005640">
    <property type="component" value="Chromosome 8"/>
</dbReference>
<dbReference type="RNAct" id="P34981">
    <property type="molecule type" value="protein"/>
</dbReference>
<dbReference type="Bgee" id="ENSG00000174417">
    <property type="expression patterns" value="Expressed in male germ line stem cell (sensu Vertebrata) in testis and 13 other cell types or tissues"/>
</dbReference>
<dbReference type="GO" id="GO:0005886">
    <property type="term" value="C:plasma membrane"/>
    <property type="evidence" value="ECO:0000304"/>
    <property type="project" value="Reactome"/>
</dbReference>
<dbReference type="GO" id="GO:0004997">
    <property type="term" value="F:thyrotropin-releasing hormone receptor activity"/>
    <property type="evidence" value="ECO:0000318"/>
    <property type="project" value="GO_Central"/>
</dbReference>
<dbReference type="GO" id="GO:0007186">
    <property type="term" value="P:G protein-coupled receptor signaling pathway"/>
    <property type="evidence" value="ECO:0000304"/>
    <property type="project" value="ProtInc"/>
</dbReference>
<dbReference type="GO" id="GO:0007200">
    <property type="term" value="P:phospholipase C-activating G protein-coupled receptor signaling pathway"/>
    <property type="evidence" value="ECO:0000318"/>
    <property type="project" value="GO_Central"/>
</dbReference>
<dbReference type="CDD" id="cd14995">
    <property type="entry name" value="7tmA_TRH-R"/>
    <property type="match status" value="1"/>
</dbReference>
<dbReference type="FunFam" id="1.20.1070.10:FF:000186">
    <property type="entry name" value="thyrotropin-releasing hormone receptor"/>
    <property type="match status" value="1"/>
</dbReference>
<dbReference type="Gene3D" id="1.20.1070.10">
    <property type="entry name" value="Rhodopsin 7-helix transmembrane proteins"/>
    <property type="match status" value="1"/>
</dbReference>
<dbReference type="InterPro" id="IPR000276">
    <property type="entry name" value="GPCR_Rhodpsn"/>
</dbReference>
<dbReference type="InterPro" id="IPR017452">
    <property type="entry name" value="GPCR_Rhodpsn_7TM"/>
</dbReference>
<dbReference type="InterPro" id="IPR002120">
    <property type="entry name" value="TRH_rcpt_1"/>
</dbReference>
<dbReference type="PANTHER" id="PTHR46061">
    <property type="entry name" value="THYROTROPIN-RELEASING HORMONE RECEPTOR"/>
    <property type="match status" value="1"/>
</dbReference>
<dbReference type="PANTHER" id="PTHR46061:SF2">
    <property type="entry name" value="THYROTROPIN-RELEASING HORMONE RECEPTOR"/>
    <property type="match status" value="1"/>
</dbReference>
<dbReference type="Pfam" id="PF00001">
    <property type="entry name" value="7tm_1"/>
    <property type="match status" value="1"/>
</dbReference>
<dbReference type="PRINTS" id="PR00237">
    <property type="entry name" value="GPCRRHODOPSN"/>
</dbReference>
<dbReference type="PRINTS" id="PR00751">
    <property type="entry name" value="THYROLIBRINR"/>
</dbReference>
<dbReference type="PRINTS" id="PR01846">
    <property type="entry name" value="TRHRFAMILY"/>
</dbReference>
<dbReference type="SMART" id="SM01381">
    <property type="entry name" value="7TM_GPCR_Srsx"/>
    <property type="match status" value="1"/>
</dbReference>
<dbReference type="SUPFAM" id="SSF81321">
    <property type="entry name" value="Family A G protein-coupled receptor-like"/>
    <property type="match status" value="1"/>
</dbReference>
<dbReference type="PROSITE" id="PS00237">
    <property type="entry name" value="G_PROTEIN_RECEP_F1_1"/>
    <property type="match status" value="1"/>
</dbReference>
<dbReference type="PROSITE" id="PS50262">
    <property type="entry name" value="G_PROTEIN_RECEP_F1_2"/>
    <property type="match status" value="1"/>
</dbReference>
<protein>
    <recommendedName>
        <fullName>Thyrotropin-releasing hormone receptor</fullName>
        <shortName>TRH-R</shortName>
    </recommendedName>
    <alternativeName>
        <fullName>Thyroliberin receptor</fullName>
    </alternativeName>
</protein>
<comment type="function">
    <text evidence="4 7">Receptor for thyrotropin-releasing hormone (TRH). Upon ligand binding, this G-protein-coupled receptor triggers activation of the phosphatidylinositol (IP3)-calcium-protein kinase C (PKC) pathway.</text>
</comment>
<comment type="interaction">
    <interactant intactId="EBI-18055230">
        <id>P34981</id>
    </interactant>
    <interactant intactId="EBI-2907070">
        <id>P11117</id>
        <label>ACP2</label>
    </interactant>
    <organismsDiffer>false</organismsDiffer>
    <experiments>2</experiments>
</comment>
<comment type="interaction">
    <interactant intactId="EBI-18055230">
        <id>P34981</id>
    </interactant>
    <interactant intactId="EBI-12062109">
        <id>Q86Z23</id>
        <label>C1QL4</label>
    </interactant>
    <organismsDiffer>false</organismsDiffer>
    <experiments>3</experiments>
</comment>
<comment type="interaction">
    <interactant intactId="EBI-18055230">
        <id>P34981</id>
    </interactant>
    <interactant intactId="EBI-372265">
        <id>P21964</id>
        <label>COMT</label>
    </interactant>
    <organismsDiffer>false</organismsDiffer>
    <experiments>3</experiments>
</comment>
<comment type="interaction">
    <interactant intactId="EBI-18055230">
        <id>P34981</id>
    </interactant>
    <interactant intactId="EBI-1753674">
        <id>P52803</id>
        <label>EFNA5</label>
    </interactant>
    <organismsDiffer>false</organismsDiffer>
    <experiments>3</experiments>
</comment>
<comment type="interaction">
    <interactant intactId="EBI-18055230">
        <id>P34981</id>
    </interactant>
    <interactant intactId="EBI-12118888">
        <id>Q96D05-2</id>
        <label>FAM241B</label>
    </interactant>
    <organismsDiffer>false</organismsDiffer>
    <experiments>3</experiments>
</comment>
<comment type="interaction">
    <interactant intactId="EBI-18055230">
        <id>P34981</id>
    </interactant>
    <interactant intactId="EBI-3905204">
        <id>P29033</id>
        <label>GJB2</label>
    </interactant>
    <organismsDiffer>false</organismsDiffer>
    <experiments>3</experiments>
</comment>
<comment type="interaction">
    <interactant intactId="EBI-18055230">
        <id>P34981</id>
    </interactant>
    <interactant intactId="EBI-725665">
        <id>Q9Y5U9</id>
        <label>IER3IP1</label>
    </interactant>
    <organismsDiffer>false</organismsDiffer>
    <experiments>3</experiments>
</comment>
<comment type="interaction">
    <interactant intactId="EBI-18055230">
        <id>P34981</id>
    </interactant>
    <interactant intactId="EBI-9550165">
        <id>Q0D2K0</id>
        <label>NIPAL4</label>
    </interactant>
    <organismsDiffer>false</organismsDiffer>
    <experiments>3</experiments>
</comment>
<comment type="interaction">
    <interactant intactId="EBI-18055230">
        <id>P34981</id>
    </interactant>
    <interactant intactId="EBI-12213001">
        <id>I3L0A0</id>
        <label>PEDS1-UBE2V1</label>
    </interactant>
    <organismsDiffer>false</organismsDiffer>
    <experiments>3</experiments>
</comment>
<comment type="interaction">
    <interactant intactId="EBI-18055230">
        <id>P34981</id>
    </interactant>
    <interactant intactId="EBI-12898013">
        <id>Q9NP94</id>
        <label>SLC39A2</label>
    </interactant>
    <organismsDiffer>false</organismsDiffer>
    <experiments>3</experiments>
</comment>
<comment type="interaction">
    <interactant intactId="EBI-18055230">
        <id>P34981</id>
    </interactant>
    <interactant intactId="EBI-2823239">
        <id>Q9NUM3</id>
        <label>SLC39A9</label>
    </interactant>
    <organismsDiffer>false</organismsDiffer>
    <experiments>3</experiments>
</comment>
<comment type="interaction">
    <interactant intactId="EBI-18055230">
        <id>P34981</id>
    </interactant>
    <interactant intactId="EBI-12266234">
        <id>Q8IVJ1</id>
        <label>SLC41A1</label>
    </interactant>
    <organismsDiffer>false</organismsDiffer>
    <experiments>3</experiments>
</comment>
<comment type="interaction">
    <interactant intactId="EBI-18055230">
        <id>P34981</id>
    </interactant>
    <interactant intactId="EBI-11423693">
        <id>Q9UIK5</id>
        <label>TMEFF2</label>
    </interactant>
    <organismsDiffer>false</organismsDiffer>
    <experiments>3</experiments>
</comment>
<comment type="interaction">
    <interactant intactId="EBI-18055230">
        <id>P34981</id>
    </interactant>
    <interactant intactId="EBI-10173151">
        <id>A2RU14</id>
        <label>TMEM218</label>
    </interactant>
    <organismsDiffer>false</organismsDiffer>
    <experiments>3</experiments>
</comment>
<comment type="interaction">
    <interactant intactId="EBI-18055230">
        <id>P34981</id>
    </interactant>
    <interactant intactId="EBI-11528917">
        <id>Q8WW34-2</id>
        <label>TMEM239</label>
    </interactant>
    <organismsDiffer>false</organismsDiffer>
    <experiments>3</experiments>
</comment>
<comment type="interaction">
    <interactant intactId="EBI-18055230">
        <id>P34981</id>
    </interactant>
    <interactant intactId="EBI-988826">
        <id>Q9Y385</id>
        <label>UBE2J1</label>
    </interactant>
    <organismsDiffer>false</organismsDiffer>
    <experiments>3</experiments>
</comment>
<comment type="interaction">
    <interactant intactId="EBI-18055230">
        <id>P34981</id>
    </interactant>
    <interactant intactId="EBI-751210">
        <id>Q96EC8</id>
        <label>YIPF6</label>
    </interactant>
    <organismsDiffer>false</organismsDiffer>
    <experiments>3</experiments>
</comment>
<comment type="subcellular location">
    <subcellularLocation>
        <location evidence="4">Cell membrane</location>
        <topology evidence="1">Multi-pass membrane protein</topology>
    </subcellularLocation>
</comment>
<comment type="disease" evidence="3 4 5 7">
    <disease id="DI-05659">
        <name>Hypothyroidism, congenital, non-goitrous, 7</name>
        <acronym>CHNG7</acronym>
        <description>A form of central hypothyroidism, a disorder characterized by sub-optimal thyroid hormone secretion, due to insufficient stimulation by thyrotropin of an otherwise normal thyroid gland. It may be caused by congenital or acquired disorders of the pituitary gland or hypothalamus. CHNG7 is a congenital, autosomal recessive form characterized by normal-to-low T4 and normal-to-high thyrotropin levels, and reduced or absent pituitary responsiveness to thyrotropin-releasing hormone. Patients may exhibit short stature, growth retardation, and delayed bone age, as well as lethargy or fatigue.</description>
        <dbReference type="MIM" id="618573"/>
    </disease>
    <text>The disease is caused by variants affecting the gene represented in this entry.</text>
</comment>
<comment type="similarity">
    <text evidence="2">Belongs to the G-protein coupled receptor 1 family.</text>
</comment>
<reference key="1">
    <citation type="journal article" date="1993" name="Biochem. Biophys. Res. Commun.">
        <title>Molecular cloning of a functional human thyrotropin-releasing hormone receptor.</title>
        <authorList>
            <person name="Matre V."/>
            <person name="Karlsen H.E."/>
            <person name="Wright M.S."/>
            <person name="Lundell I."/>
            <person name="Fjeldheim K."/>
            <person name="Gabrielsen O.S."/>
            <person name="Larhammar D."/>
            <person name="Gautvik K.M."/>
        </authorList>
    </citation>
    <scope>NUCLEOTIDE SEQUENCE [MRNA]</scope>
</reference>
<reference key="2">
    <citation type="journal article" date="1993" name="Biochem. Biophys. Res. Commun.">
        <title>Pituitary adenomas of patients with acromegaly express thyrotropin-releasing hormone receptor messenger RNA: cloning and functional expression of the human thyrotropin-releasing hormone receptor gene.</title>
        <authorList>
            <person name="Yamada M."/>
            <person name="Monden T."/>
            <person name="Satoh T."/>
            <person name="Satoh N."/>
            <person name="Murakami M."/>
            <person name="Iriuchijima T."/>
            <person name="Kakegawa T."/>
            <person name="Mori M."/>
        </authorList>
    </citation>
    <scope>NUCLEOTIDE SEQUENCE [MRNA]</scope>
    <source>
        <tissue>Pituitary</tissue>
    </source>
</reference>
<reference key="3">
    <citation type="journal article" date="1993" name="Mol. Cell. Endocrinol.">
        <title>Cloning and functional characterisation of the human TRH receptor.</title>
        <authorList>
            <person name="Duthie S.M."/>
            <person name="Taylor P.L."/>
            <person name="Anderson L."/>
            <person name="Cook J."/>
            <person name="Eidne K.A."/>
        </authorList>
    </citation>
    <scope>NUCLEOTIDE SEQUENCE [MRNA]</scope>
</reference>
<reference key="4">
    <citation type="journal article" date="1994" name="Biochim. Biophys. Acta">
        <title>Molecular cloning and functional expression of a human thyrotropin-releasing hormone (TRH) receptor gene.</title>
        <authorList>
            <person name="Hinuma S."/>
            <person name="Hosoya M."/>
            <person name="Ogi K."/>
            <person name="Tanaka H."/>
            <person name="Nagai Y."/>
            <person name="Onda H."/>
        </authorList>
    </citation>
    <scope>NUCLEOTIDE SEQUENCE [GENOMIC DNA]</scope>
</reference>
<reference key="5">
    <citation type="journal article" date="1996" name="J. Biol. Chem.">
        <title>Genomic organization and promoter function of the human thyrotropin-releasing hormone receptor gene.</title>
        <authorList>
            <person name="Iwasaki T."/>
            <person name="Yamada M."/>
            <person name="Satoh T."/>
            <person name="Konaka S."/>
            <person name="Ren Y."/>
            <person name="Hashimoto K."/>
            <person name="Kohga H."/>
            <person name="Kato Y."/>
            <person name="Mori M."/>
        </authorList>
    </citation>
    <scope>NUCLEOTIDE SEQUENCE [GENOMIC DNA]</scope>
</reference>
<reference key="6">
    <citation type="submission" date="2003-12" db="EMBL/GenBank/DDBJ databases">
        <title>cDNA clones of human proteins involved in signal transduction sequenced by the Guthrie cDNA resource center (www.cdna.org).</title>
        <authorList>
            <person name="Kopatz S.A."/>
            <person name="Aronstam R.S."/>
            <person name="Sharma S.V."/>
        </authorList>
    </citation>
    <scope>NUCLEOTIDE SEQUENCE [LARGE SCALE MRNA]</scope>
    <source>
        <tissue>Pituitary</tissue>
    </source>
</reference>
<reference key="7">
    <citation type="journal article" date="2004" name="Genome Res.">
        <title>The status, quality, and expansion of the NIH full-length cDNA project: the Mammalian Gene Collection (MGC).</title>
        <authorList>
            <consortium name="The MGC Project Team"/>
        </authorList>
    </citation>
    <scope>NUCLEOTIDE SEQUENCE [LARGE SCALE MRNA]</scope>
    <source>
        <tissue>Brain</tissue>
    </source>
</reference>
<reference key="8">
    <citation type="journal article" date="1999" name="J. Neurochem.">
        <title>Structural and functional organization of the gene encoding the human thyrotropin-releasing hormone receptor.</title>
        <authorList>
            <person name="Matre V."/>
            <person name="Hovring P.I."/>
            <person name="Orstavik S."/>
            <person name="Frengen E."/>
            <person name="Rian E."/>
            <person name="Velickovic Z."/>
            <person name="Murray-Mcintosh R.P."/>
            <person name="Gautvik K.M."/>
        </authorList>
    </citation>
    <scope>NUCLEOTIDE SEQUENCE [GENOMIC DNA] OF 1-263</scope>
    <source>
        <tissue>Placenta</tissue>
    </source>
</reference>
<reference key="9">
    <citation type="journal article" date="1996" name="Endocrinology">
        <title>A disulfide bonding interaction role for cysteines in the extracellular domain of the thyrotropin-releasing hormone receptor.</title>
        <authorList>
            <person name="Cook J.V."/>
            <person name="McGregor A."/>
            <person name="Lee T."/>
            <person name="Milligan G."/>
            <person name="Eidne K.A."/>
        </authorList>
    </citation>
    <scope>DISULFIDE BOND</scope>
</reference>
<reference key="10">
    <citation type="journal article" date="1997" name="J. Clin. Endocrinol. Metab.">
        <title>A novel mechanism for isolated central hypothyroidism: inactivating mutations in the thyrotropin-releasing hormone receptor gene.</title>
        <authorList>
            <person name="Collu R."/>
            <person name="Tang J."/>
            <person name="Castagne J."/>
            <person name="Lagace G."/>
            <person name="Masson N."/>
            <person name="Huot C."/>
            <person name="Deal C."/>
            <person name="Delvin E."/>
            <person name="Faccenda E."/>
            <person name="Eidne K.A."/>
            <person name="Van Vliet G."/>
        </authorList>
    </citation>
    <scope>FUNCTION</scope>
    <scope>INVOLVEMENT IN CHNG7</scope>
    <scope>VARIANTS CHNG7 17-ARG--SER-398 DEL AND 115-SER--ALA-118 DELINS THR</scope>
    <scope>CHARACTERIZATION OF VARIANTS CHNG7 17-ARG--SER-398 DEL AND 115-SER--ALA-118 DELINS THR</scope>
</reference>
<reference key="11">
    <citation type="journal article" date="2009" name="N. Engl. J. Med.">
        <title>A family with complete resistance to thyrotropin-releasing hormone.</title>
        <authorList>
            <person name="Bonomi M."/>
            <person name="Busnelli M."/>
            <person name="Beck-Peccoz P."/>
            <person name="Costanzo D."/>
            <person name="Antonica F."/>
            <person name="Dolci C."/>
            <person name="Pilotta A."/>
            <person name="Buzi F."/>
            <person name="Persani L."/>
        </authorList>
    </citation>
    <scope>INVOLVEMENT IN CHNG7</scope>
    <scope>VARIANT CHNG7 17-ARG--SER-398 DEL</scope>
</reference>
<reference key="12">
    <citation type="journal article" date="2016" name="J. Clin. Endocrinol. Metab.">
        <title>A novel thyrotropin-releasing hormone receptor missense mutation (P81R) in central congenital hypothyroidism.</title>
        <authorList>
            <person name="Koulouri O."/>
            <person name="Nicholas A.K."/>
            <person name="Schoenmakers E."/>
            <person name="Mokrosinski J."/>
            <person name="Lane F."/>
            <person name="Cole T."/>
            <person name="Kirk J."/>
            <person name="Farooqi I.S."/>
            <person name="Chatterjee V.K."/>
            <person name="Gurnell M."/>
            <person name="Schoenmakers N."/>
        </authorList>
    </citation>
    <scope>FUNCTION</scope>
    <scope>SUBCELLULAR LOCATION</scope>
    <scope>INVOLVEMENT IN CHNG7</scope>
    <scope>VARIANT CHNG7 ARG-81</scope>
    <scope>CHARACTERIZATION OF VARIANT CHNG7 ARG-81</scope>
</reference>
<reference key="13">
    <citation type="journal article" date="2017" name="J. Clin. Endocrinol. Metab.">
        <title>Central hypothyroidism due to a TRHR mutation causing impaired ligand affinity and transactivation of Gq.</title>
        <authorList>
            <person name="Garcia M."/>
            <person name="Gonzalez de Buitrago J."/>
            <person name="Jimenez-Roses M."/>
            <person name="Pardo L."/>
            <person name="Hinkle P.M."/>
            <person name="Moreno J.C."/>
        </authorList>
    </citation>
    <scope>FUNCTION</scope>
    <scope>INVOLVEMENT IN CHNG7</scope>
    <scope>VARIANT CHNG7 THR-131</scope>
    <scope>CHARACTERIZATION OF VARIANT CHNG7 THR-131</scope>
</reference>
<name>TRFR_HUMAN</name>
<proteinExistence type="evidence at protein level"/>